<keyword id="KW-0025">Alternative splicing</keyword>
<keyword id="KW-0106">Calcium</keyword>
<keyword id="KW-0407">Ion channel</keyword>
<keyword id="KW-0406">Ion transport</keyword>
<keyword id="KW-0472">Membrane</keyword>
<keyword id="KW-0479">Metal-binding</keyword>
<keyword id="KW-0630">Potassium</keyword>
<keyword id="KW-0631">Potassium channel</keyword>
<keyword id="KW-0633">Potassium transport</keyword>
<keyword id="KW-1185">Reference proteome</keyword>
<keyword id="KW-0677">Repeat</keyword>
<keyword id="KW-0812">Transmembrane</keyword>
<keyword id="KW-1133">Transmembrane helix</keyword>
<keyword id="KW-0813">Transport</keyword>
<keyword id="KW-0926">Vacuole</keyword>
<proteinExistence type="evidence at protein level"/>
<feature type="chain" id="PRO_0000101777" description="Potassium inward rectifier (Kir)-like channel 3">
    <location>
        <begin position="1"/>
        <end position="260"/>
    </location>
</feature>
<feature type="topological domain" description="Cytoplasmic" evidence="2">
    <location>
        <begin position="1"/>
        <end position="68"/>
    </location>
</feature>
<feature type="transmembrane region" description="Helical" evidence="2">
    <location>
        <begin position="69"/>
        <end position="89"/>
    </location>
</feature>
<feature type="intramembrane region" description="Pore-forming; Name=Pore-forming 1" evidence="2">
    <location>
        <begin position="127"/>
        <end position="146"/>
    </location>
</feature>
<feature type="transmembrane region" description="Helical" evidence="2">
    <location>
        <begin position="153"/>
        <end position="173"/>
    </location>
</feature>
<feature type="topological domain" description="Cytoplasmic" evidence="2">
    <location>
        <begin position="174"/>
        <end position="260"/>
    </location>
</feature>
<feature type="domain" description="EF-hand 1">
    <location>
        <begin position="190"/>
        <end position="225"/>
    </location>
</feature>
<feature type="domain" description="EF-hand 2">
    <location>
        <begin position="229"/>
        <end position="256"/>
    </location>
</feature>
<feature type="region of interest" description="Disordered" evidence="4">
    <location>
        <begin position="1"/>
        <end position="34"/>
    </location>
</feature>
<feature type="compositionally biased region" description="Polar residues" evidence="4">
    <location>
        <begin position="18"/>
        <end position="31"/>
    </location>
</feature>
<feature type="binding site" evidence="3">
    <location>
        <position position="203"/>
    </location>
    <ligand>
        <name>Ca(2+)</name>
        <dbReference type="ChEBI" id="CHEBI:29108"/>
        <label>1</label>
    </ligand>
</feature>
<feature type="binding site" evidence="3">
    <location>
        <position position="205"/>
    </location>
    <ligand>
        <name>Ca(2+)</name>
        <dbReference type="ChEBI" id="CHEBI:29108"/>
        <label>1</label>
    </ligand>
</feature>
<feature type="binding site" evidence="3">
    <location>
        <position position="207"/>
    </location>
    <ligand>
        <name>Ca(2+)</name>
        <dbReference type="ChEBI" id="CHEBI:29108"/>
        <label>1</label>
    </ligand>
</feature>
<feature type="binding site" evidence="3">
    <location>
        <position position="209"/>
    </location>
    <ligand>
        <name>Ca(2+)</name>
        <dbReference type="ChEBI" id="CHEBI:29108"/>
        <label>1</label>
    </ligand>
</feature>
<feature type="binding site" evidence="3">
    <location>
        <position position="214"/>
    </location>
    <ligand>
        <name>Ca(2+)</name>
        <dbReference type="ChEBI" id="CHEBI:29108"/>
        <label>1</label>
    </ligand>
</feature>
<feature type="binding site" evidence="7">
    <location>
        <position position="242"/>
    </location>
    <ligand>
        <name>Ca(2+)</name>
        <dbReference type="ChEBI" id="CHEBI:29108"/>
        <label>2</label>
    </ligand>
</feature>
<feature type="binding site" evidence="7">
    <location>
        <position position="246"/>
    </location>
    <ligand>
        <name>Ca(2+)</name>
        <dbReference type="ChEBI" id="CHEBI:29108"/>
        <label>2</label>
    </ligand>
</feature>
<feature type="binding site" evidence="7">
    <location>
        <position position="248"/>
    </location>
    <ligand>
        <name>Ca(2+)</name>
        <dbReference type="ChEBI" id="CHEBI:29108"/>
        <label>2</label>
    </ligand>
</feature>
<feature type="binding site" evidence="7">
    <location>
        <position position="253"/>
    </location>
    <ligand>
        <name>Ca(2+)</name>
        <dbReference type="ChEBI" id="CHEBI:29108"/>
        <label>2</label>
    </ligand>
</feature>
<feature type="splice variant" id="VSP_043863" description="In isoform 2." evidence="7">
    <original>QFDKLDRTQSGRITLVDLTTATS</original>
    <variation>HNTHYNMIEDGSGKSAVLDIVEP</variation>
    <location>
        <begin position="237"/>
        <end position="259"/>
    </location>
</feature>
<accession>Q9XFR0</accession>
<accession>F4KHG2</accession>
<dbReference type="EMBL" id="AJ010873">
    <property type="protein sequence ID" value="CAB40380.1"/>
    <property type="molecule type" value="mRNA"/>
</dbReference>
<dbReference type="EMBL" id="AB010698">
    <property type="protein sequence ID" value="BAB11091.1"/>
    <property type="molecule type" value="Genomic_DNA"/>
</dbReference>
<dbReference type="EMBL" id="CP002688">
    <property type="protein sequence ID" value="AED95373.1"/>
    <property type="molecule type" value="Genomic_DNA"/>
</dbReference>
<dbReference type="EMBL" id="CP002688">
    <property type="protein sequence ID" value="AED95374.1"/>
    <property type="molecule type" value="Genomic_DNA"/>
</dbReference>
<dbReference type="RefSeq" id="NP_001190480.1">
    <molecule id="Q9XFR0-2"/>
    <property type="nucleotide sequence ID" value="NM_001203551.1"/>
</dbReference>
<dbReference type="RefSeq" id="NP_199448.1">
    <molecule id="Q9XFR0-1"/>
    <property type="nucleotide sequence ID" value="NM_124006.3"/>
</dbReference>
<dbReference type="SMR" id="Q9XFR0"/>
<dbReference type="STRING" id="3702.Q9XFR0"/>
<dbReference type="TCDB" id="1.A.1.7.6">
    <property type="family name" value="the voltage-gated ion channel (vic) superfamily"/>
</dbReference>
<dbReference type="GlyGen" id="Q9XFR0">
    <property type="glycosylation" value="1 site"/>
</dbReference>
<dbReference type="PaxDb" id="3702-AT5G46360.2"/>
<dbReference type="EnsemblPlants" id="AT5G46360.1">
    <molecule id="Q9XFR0-1"/>
    <property type="protein sequence ID" value="AT5G46360.1"/>
    <property type="gene ID" value="AT5G46360"/>
</dbReference>
<dbReference type="EnsemblPlants" id="AT5G46360.2">
    <molecule id="Q9XFR0-2"/>
    <property type="protein sequence ID" value="AT5G46360.2"/>
    <property type="gene ID" value="AT5G46360"/>
</dbReference>
<dbReference type="GeneID" id="834679"/>
<dbReference type="Gramene" id="AT5G46360.1">
    <molecule id="Q9XFR0-1"/>
    <property type="protein sequence ID" value="AT5G46360.1"/>
    <property type="gene ID" value="AT5G46360"/>
</dbReference>
<dbReference type="Gramene" id="AT5G46360.2">
    <molecule id="Q9XFR0-2"/>
    <property type="protein sequence ID" value="AT5G46360.2"/>
    <property type="gene ID" value="AT5G46360"/>
</dbReference>
<dbReference type="KEGG" id="ath:AT5G46360"/>
<dbReference type="Araport" id="AT5G46360"/>
<dbReference type="TAIR" id="AT5G46360">
    <property type="gene designation" value="KCO3"/>
</dbReference>
<dbReference type="eggNOG" id="KOG1418">
    <property type="taxonomic scope" value="Eukaryota"/>
</dbReference>
<dbReference type="HOGENOM" id="CLU_033675_3_0_1"/>
<dbReference type="InParanoid" id="Q9XFR0"/>
<dbReference type="OMA" id="DVAQICK"/>
<dbReference type="OrthoDB" id="415460at2759"/>
<dbReference type="PhylomeDB" id="Q9XFR0"/>
<dbReference type="PRO" id="PR:Q9XFR0"/>
<dbReference type="Proteomes" id="UP000006548">
    <property type="component" value="Chromosome 5"/>
</dbReference>
<dbReference type="ExpressionAtlas" id="Q9XFR0">
    <property type="expression patterns" value="baseline and differential"/>
</dbReference>
<dbReference type="GO" id="GO:0009705">
    <property type="term" value="C:plant-type vacuole membrane"/>
    <property type="evidence" value="ECO:0000314"/>
    <property type="project" value="TAIR"/>
</dbReference>
<dbReference type="GO" id="GO:0046872">
    <property type="term" value="F:metal ion binding"/>
    <property type="evidence" value="ECO:0007669"/>
    <property type="project" value="UniProtKB-KW"/>
</dbReference>
<dbReference type="GO" id="GO:0005267">
    <property type="term" value="F:potassium channel activity"/>
    <property type="evidence" value="ECO:0007669"/>
    <property type="project" value="UniProtKB-KW"/>
</dbReference>
<dbReference type="FunFam" id="1.10.287.70:FF:000167">
    <property type="entry name" value="Two-pore potassium channel 2-like"/>
    <property type="match status" value="1"/>
</dbReference>
<dbReference type="Gene3D" id="1.10.287.70">
    <property type="match status" value="1"/>
</dbReference>
<dbReference type="Gene3D" id="1.10.238.10">
    <property type="entry name" value="EF-hand"/>
    <property type="match status" value="1"/>
</dbReference>
<dbReference type="InterPro" id="IPR003280">
    <property type="entry name" value="2pore_dom_K_chnl"/>
</dbReference>
<dbReference type="InterPro" id="IPR011992">
    <property type="entry name" value="EF-hand-dom_pair"/>
</dbReference>
<dbReference type="InterPro" id="IPR018247">
    <property type="entry name" value="EF_Hand_1_Ca_BS"/>
</dbReference>
<dbReference type="InterPro" id="IPR013099">
    <property type="entry name" value="K_chnl_dom"/>
</dbReference>
<dbReference type="PANTHER" id="PTHR11003">
    <property type="entry name" value="POTASSIUM CHANNEL, SUBFAMILY K"/>
    <property type="match status" value="1"/>
</dbReference>
<dbReference type="PANTHER" id="PTHR11003:SF274">
    <property type="entry name" value="POTASSIUM INWARD RECTIFIER (KIR)-LIKE CHANNEL 3-RELATED"/>
    <property type="match status" value="1"/>
</dbReference>
<dbReference type="Pfam" id="PF07885">
    <property type="entry name" value="Ion_trans_2"/>
    <property type="match status" value="1"/>
</dbReference>
<dbReference type="SUPFAM" id="SSF47473">
    <property type="entry name" value="EF-hand"/>
    <property type="match status" value="1"/>
</dbReference>
<dbReference type="SUPFAM" id="SSF81324">
    <property type="entry name" value="Voltage-gated potassium channels"/>
    <property type="match status" value="1"/>
</dbReference>
<dbReference type="PROSITE" id="PS00018">
    <property type="entry name" value="EF_HAND_1"/>
    <property type="match status" value="1"/>
</dbReference>
<comment type="function">
    <text evidence="1">Probable calcium-activated potassium channel.</text>
</comment>
<comment type="subunit">
    <text evidence="8">Homotetramer.</text>
</comment>
<comment type="subcellular location">
    <subcellularLocation>
        <location evidence="5 6">Vacuole membrane</location>
        <topology evidence="5 6">Multi-pass membrane protein</topology>
    </subcellularLocation>
</comment>
<comment type="alternative products">
    <event type="alternative splicing"/>
    <isoform>
        <id>Q9XFR0-1</id>
        <name>1</name>
        <sequence type="displayed"/>
    </isoform>
    <isoform>
        <id>Q9XFR0-2</id>
        <name>2</name>
        <sequence type="described" ref="VSP_043863"/>
    </isoform>
</comment>
<comment type="tissue specificity">
    <text evidence="5">Expressed in hydathodes and the vascular tissues of roots, stems, leaves and flowers.</text>
</comment>
<comment type="domain">
    <text>The pore-forming region (also called P-domain or P-loop) is enclosed by two transmembrane segments (1P/2TM) and contains a pseudo GYGD signature motif such as GYFD which seems to be involved in potassium selectivity.</text>
</comment>
<comment type="similarity">
    <text evidence="7">Belongs to the two pore domain potassium channel (TC 1.A.1.7) family.</text>
</comment>
<comment type="caution">
    <text evidence="7">KCO3 shares similarity to the TPK family (2P/4TM) but lacks the conserved internal part including one pore-forming region and two transmembrane segments. As a result and according to its structure, KCO3 could also be classified as a member of the IRK family (1P/2TM).</text>
</comment>
<organism>
    <name type="scientific">Arabidopsis thaliana</name>
    <name type="common">Mouse-ear cress</name>
    <dbReference type="NCBI Taxonomy" id="3702"/>
    <lineage>
        <taxon>Eukaryota</taxon>
        <taxon>Viridiplantae</taxon>
        <taxon>Streptophyta</taxon>
        <taxon>Embryophyta</taxon>
        <taxon>Tracheophyta</taxon>
        <taxon>Spermatophyta</taxon>
        <taxon>Magnoliopsida</taxon>
        <taxon>eudicotyledons</taxon>
        <taxon>Gunneridae</taxon>
        <taxon>Pentapetalae</taxon>
        <taxon>rosids</taxon>
        <taxon>malvids</taxon>
        <taxon>Brassicales</taxon>
        <taxon>Brassicaceae</taxon>
        <taxon>Camelineae</taxon>
        <taxon>Arabidopsis</taxon>
    </lineage>
</organism>
<name>KCO3_ARATH</name>
<protein>
    <recommendedName>
        <fullName>Potassium inward rectifier (Kir)-like channel 3</fullName>
        <shortName>AtKCO3</shortName>
    </recommendedName>
</protein>
<gene>
    <name type="primary">KCO3</name>
    <name type="ordered locus">At5g46360</name>
    <name type="ORF">MPL12.16</name>
</gene>
<sequence>MPMTPSEFKNRLLFGSLPRSSSDPTDLQFTEPNVPPSLFSLPEHNDDTATDMAPDQETEQSVSKSIARQALALLVVYLSLGVLIYWLTLDSDNAYQTHPVAVALYFFVVTFCGFLIVHFVVKIGWLDSFCFSVMMVTTVGFGDRAFNTWLGTFLAAVWLLVSTLAVARAFLFLADARADKRNRERAKKVLGESISISQFFAADIDNDGRLSLAEFAIYKLKQMEKITQEDFIQICNQFDKLDRTQSGRITLVDLTTATSV</sequence>
<evidence type="ECO:0000250" key="1"/>
<evidence type="ECO:0000255" key="2"/>
<evidence type="ECO:0000255" key="3">
    <source>
        <dbReference type="PROSITE-ProRule" id="PRU10142"/>
    </source>
</evidence>
<evidence type="ECO:0000256" key="4">
    <source>
        <dbReference type="SAM" id="MobiDB-lite"/>
    </source>
</evidence>
<evidence type="ECO:0000269" key="5">
    <source>
    </source>
</evidence>
<evidence type="ECO:0000269" key="6">
    <source>
    </source>
</evidence>
<evidence type="ECO:0000305" key="7"/>
<evidence type="ECO:0000305" key="8">
    <source>
    </source>
</evidence>
<reference key="1">
    <citation type="submission" date="1998-09" db="EMBL/GenBank/DDBJ databases">
        <title>Association of novel structural features of a KCO-like protein with a new function for plant potassium channels?</title>
        <authorList>
            <person name="Wiese S."/>
            <person name="Czempinski K."/>
            <person name="Zimmermann S."/>
            <person name="Mueller-Roeber B."/>
        </authorList>
    </citation>
    <scope>NUCLEOTIDE SEQUENCE [MRNA] (ISOFORM 1)</scope>
    <source>
        <strain>cv. C24</strain>
        <tissue>Seedling</tissue>
    </source>
</reference>
<reference key="2">
    <citation type="journal article" date="1998" name="DNA Res.">
        <title>Structural analysis of Arabidopsis thaliana chromosome 5. V. Sequence features of the regions of 1,381,565 bp covered by twenty one physically assigned P1 and TAC clones.</title>
        <authorList>
            <person name="Kaneko T."/>
            <person name="Kotani H."/>
            <person name="Nakamura Y."/>
            <person name="Sato S."/>
            <person name="Asamizu E."/>
            <person name="Miyajima N."/>
            <person name="Tabata S."/>
        </authorList>
    </citation>
    <scope>NUCLEOTIDE SEQUENCE [LARGE SCALE GENOMIC DNA]</scope>
    <source>
        <strain>cv. Columbia</strain>
    </source>
</reference>
<reference key="3">
    <citation type="journal article" date="2017" name="Plant J.">
        <title>Araport11: a complete reannotation of the Arabidopsis thaliana reference genome.</title>
        <authorList>
            <person name="Cheng C.Y."/>
            <person name="Krishnakumar V."/>
            <person name="Chan A.P."/>
            <person name="Thibaud-Nissen F."/>
            <person name="Schobel S."/>
            <person name="Town C.D."/>
        </authorList>
    </citation>
    <scope>GENOME REANNOTATION</scope>
    <source>
        <strain>cv. Columbia</strain>
    </source>
</reference>
<reference key="4">
    <citation type="journal article" date="2001" name="Plant Physiol.">
        <title>Phylogenetic relationships within cation transporter families of Arabidopsis.</title>
        <authorList>
            <person name="Maeser P."/>
            <person name="Thomine S."/>
            <person name="Schroeder J.I."/>
            <person name="Ward J.M."/>
            <person name="Hirschi K."/>
            <person name="Sze H."/>
            <person name="Talke I.N."/>
            <person name="Amtmann A."/>
            <person name="Maathuis F.J.M."/>
            <person name="Sanders D."/>
            <person name="Harper J.F."/>
            <person name="Tchieu J."/>
            <person name="Gribskov M."/>
            <person name="Persans M.W."/>
            <person name="Salt D.E."/>
            <person name="Kim S.A."/>
            <person name="Guerinot M.L."/>
        </authorList>
    </citation>
    <scope>GENE FAMILY</scope>
    <scope>NOMENCLATURE</scope>
</reference>
<reference key="5">
    <citation type="journal article" date="2006" name="Plant J.">
        <title>Members of the Arabidopsis AtTPK/KCO family form homomeric vacuolar channels in planta.</title>
        <authorList>
            <person name="Voelker C."/>
            <person name="Schmidt D."/>
            <person name="Mueller-Roeber B."/>
            <person name="Czempinski K."/>
        </authorList>
    </citation>
    <scope>TISSUE SPECIFICITY</scope>
    <scope>SUBUNIT</scope>
    <scope>SUBCELLULAR LOCATION</scope>
</reference>
<reference key="6">
    <citation type="journal article" date="2007" name="Plant J.">
        <title>TPK1, a Ca(2+)-regulated Arabidopsis vacuole two-pore K(+) channel is activated by 14-3-3 proteins.</title>
        <authorList>
            <person name="Latz A."/>
            <person name="Becker D."/>
            <person name="Hekman M."/>
            <person name="Mueller T."/>
            <person name="Beyhl D."/>
            <person name="Marten I."/>
            <person name="Eing C."/>
            <person name="Fischer A."/>
            <person name="Dunkel M."/>
            <person name="Bertl A."/>
            <person name="Rapp U.R."/>
            <person name="Hedrich R."/>
        </authorList>
    </citation>
    <scope>SUBCELLULAR LOCATION</scope>
</reference>